<reference key="1">
    <citation type="journal article" date="2005" name="Nature">
        <title>The genome of the social amoeba Dictyostelium discoideum.</title>
        <authorList>
            <person name="Eichinger L."/>
            <person name="Pachebat J.A."/>
            <person name="Gloeckner G."/>
            <person name="Rajandream M.A."/>
            <person name="Sucgang R."/>
            <person name="Berriman M."/>
            <person name="Song J."/>
            <person name="Olsen R."/>
            <person name="Szafranski K."/>
            <person name="Xu Q."/>
            <person name="Tunggal B."/>
            <person name="Kummerfeld S."/>
            <person name="Madera M."/>
            <person name="Konfortov B.A."/>
            <person name="Rivero F."/>
            <person name="Bankier A.T."/>
            <person name="Lehmann R."/>
            <person name="Hamlin N."/>
            <person name="Davies R."/>
            <person name="Gaudet P."/>
            <person name="Fey P."/>
            <person name="Pilcher K."/>
            <person name="Chen G."/>
            <person name="Saunders D."/>
            <person name="Sodergren E.J."/>
            <person name="Davis P."/>
            <person name="Kerhornou A."/>
            <person name="Nie X."/>
            <person name="Hall N."/>
            <person name="Anjard C."/>
            <person name="Hemphill L."/>
            <person name="Bason N."/>
            <person name="Farbrother P."/>
            <person name="Desany B."/>
            <person name="Just E."/>
            <person name="Morio T."/>
            <person name="Rost R."/>
            <person name="Churcher C.M."/>
            <person name="Cooper J."/>
            <person name="Haydock S."/>
            <person name="van Driessche N."/>
            <person name="Cronin A."/>
            <person name="Goodhead I."/>
            <person name="Muzny D.M."/>
            <person name="Mourier T."/>
            <person name="Pain A."/>
            <person name="Lu M."/>
            <person name="Harper D."/>
            <person name="Lindsay R."/>
            <person name="Hauser H."/>
            <person name="James K.D."/>
            <person name="Quiles M."/>
            <person name="Madan Babu M."/>
            <person name="Saito T."/>
            <person name="Buchrieser C."/>
            <person name="Wardroper A."/>
            <person name="Felder M."/>
            <person name="Thangavelu M."/>
            <person name="Johnson D."/>
            <person name="Knights A."/>
            <person name="Loulseged H."/>
            <person name="Mungall K.L."/>
            <person name="Oliver K."/>
            <person name="Price C."/>
            <person name="Quail M.A."/>
            <person name="Urushihara H."/>
            <person name="Hernandez J."/>
            <person name="Rabbinowitsch E."/>
            <person name="Steffen D."/>
            <person name="Sanders M."/>
            <person name="Ma J."/>
            <person name="Kohara Y."/>
            <person name="Sharp S."/>
            <person name="Simmonds M.N."/>
            <person name="Spiegler S."/>
            <person name="Tivey A."/>
            <person name="Sugano S."/>
            <person name="White B."/>
            <person name="Walker D."/>
            <person name="Woodward J.R."/>
            <person name="Winckler T."/>
            <person name="Tanaka Y."/>
            <person name="Shaulsky G."/>
            <person name="Schleicher M."/>
            <person name="Weinstock G.M."/>
            <person name="Rosenthal A."/>
            <person name="Cox E.C."/>
            <person name="Chisholm R.L."/>
            <person name="Gibbs R.A."/>
            <person name="Loomis W.F."/>
            <person name="Platzer M."/>
            <person name="Kay R.R."/>
            <person name="Williams J.G."/>
            <person name="Dear P.H."/>
            <person name="Noegel A.A."/>
            <person name="Barrell B.G."/>
            <person name="Kuspa A."/>
        </authorList>
    </citation>
    <scope>NUCLEOTIDE SEQUENCE [LARGE SCALE GENOMIC DNA]</scope>
    <source>
        <strain>AX4</strain>
    </source>
</reference>
<sequence>MNINRNNINDSNRHSTSFNDNFDSFGNQNGFINNNSNNNNNNKNNNNNKNNNNNNNNNDYNNNNNRSSNNGDNCNNNNINKNNYNNNYNNNNSFDNNNFNNNNNKGFNDSNNNNHTNNNINPKNNFDRSSNKGFGPLNDNFILSPIKNIFRGDFCNESIVLKPIKENIKINNNNNNNKDNNNSNFNNNNTNNDNNNNNNNNNNNNNNNNNNNNNNNNNNNNNNNNNINNNNYDYNNNTNFNNNNTNNNNNYNNYNNNNNNNNNTNFNNNTNNTNNKNKNNSNNTTNNTNNYNKNNNNNNNNNKNNNNNNNNNNNNNNNNNNNNNNSNNNNNNNINNKNNNNLNNYDNYRCNYQNSRIPNSACSTPLSSISPTQQETFLKFNESGGGLNNNTNFNNQTFGNNNKNQNNDNNLNNNDNDKNNYYDNQYNSNIDNIGNSDDSIGGQTNKNKNKNKNKNNNNNNNNNNNNNNNNNNNNNSNNDQKTSSSLDTMIDENWDQHKEKHNKKHENGDISESKPKKKIKSKYDLNIENSLKILTNFNNLNEKVEDVIQMDPVEKEFQNDLRIYSIVREISVSELETKSNNELIDISRILGLPVHKNHRSEIFFKLFNYLNFFKKKMEKKIEQRGLELKDILINSRPSEYNDYSFQNQKKQKTEQREHKDILANRIQNQIQEQVQNQIQFLIQNYNQNQNQNQKQNQNQNQKNQNHQPQPPLQPQRQRYFPQDKPQNQNNQPPLQHQHQYQYQYQNQDQYQDHDHEHEHDHDQNQNQNQNQHQSRNQNQDQYQDHDHEHEHDHDQNQNQNQYQSQNQQNQNQNQNQNLIQIQNHNRDIANYSLSNRDSNSRNEDNSCDFNYNSSCNNININNNNNNNNNNNNNNNNYYNYNQNQNQNQSQNHNRGILDNRINSNNSLSSRDSNGRNRDNSCDFNNYKKSSNNSNSNNNNNINNNNNNNNNNNNNNNNNNNKNNNNNNNNKNNNSNNNSYTCNNNSNNSFNNLSSIDRGYNNHNTNPNNPNNNPNNPNNNPNNPNNPNNPNNNTSNTSNTSNTNNTNNTNNTNTSNYNSNNSNSNNSNSDNINSNNINTNINTNINSNTNSNSNTNNINNINSNNINNINNINSNNNNNNPNPNTNSNNINTASNDSNSNNINTNSNNINPNINSDSNNNFNNNNNSNNNNINSNSNIFNNINSSIDRSNSNGFNNNNSNDQRNIDSSSNSDIVDVDSDDDSSGVFIVDDTSSNKSNRASSVKTLGTSSLAIKHEYDSRNKSSLNFFSDQTTLEDGNTSFDEKVLYIKRVLINDFRSKNHIVDMGKAIGIDVPPKDTKANVLTLMIAFVNDYLDQKKKRLESNSSWDPNGGNYIDHNEFFKTPTPGQRQVYNDDINDDNGNNNNNNSNNNINTNNNININTNINTNTNNNTNNNTNINTNANTNTNTYSNTNINNNTNTNSNGFNGNNIDNGSLNNNNFNNNSNNIDNGSLNNSNNIDNCSLNNNSNNNNNSNSNSNSNNNNNNNNYYNNNNNNNNNYNNYNGSYNCNNNNNSYYYNNNSSNNNNNSYNNNNNYYNSNNNNNNNNNNNNNNNNNNNNNNNNNNNNNNNNRYDCNNNNNYSNNNSNSNSNNNSNYSNNSYDCNNDNNNNIFSNSNGHNDNDIGNDFDNDNDNDSYIDDDNNVYDNNDGDYNNNKNNNYNNNNNNNNNNNNSNNNNNNNNNNRSNYYGNEDNNINCIDTNGNGNGNIYSCSNSNSNSYSNSNSNSNSNSNSNSNNNSNNSNNSNNSNSNSNNNINNNNINNNNTNNNNNNNSYICNNNNNNNNNNNNKNNNNNNNNNNNNNNNNNSLYGKDNEGFSNQINDNFNFYKSQGNNILEDFNLNNFQTNDKILKEMIDKLNNYGISIKPKIGKGNSQMIVNEGERENKERLFWSVFRDKSLLDKIVSYLAECIQGKPKLTSFKYYNIVHIKWMLDNDYIELIQDKVFRNETLLFGAYKSEDMTKEEVVSILFKKVNQKNCKNSEEIEKQLKFYQLLVHRFGNEIFKGINGGIQGLLELAITAKNSIALIVLFSMIESNYTLTDEILLNSFKCTIKVNSFSMIKLITFKIIKKDYQIIRNYQEVTNTTFEQIFQSIINPSIKIINFLIDIGIVMFSFKRDDSPPICFDSILVKSNSNTLASEISTRKKNLRFVKEYKTIIGESGFINSNCGVISIEMDKHEPHPSRPSIFNKNSLKEIINACYLNINFNYDKNSPLLKRQIETLFLFYPVFYSTVEVISIITNRIEAVRNCFSKEQLSLKLKHLIKIYPEDSIQFKGINCLVSFYLSFDFQSKFYCLYLHYLIFGNFISNINSDVLNVLPKDFDLNYFEKSLKYGSSIYCAKFKNEIARNFPKLVKDKKFFILFKHCDKNSVASRYKKLEFFRTIINQQSHSTERCNFALFCLLISTNDLELIEAACNEFTVFKEGFSYDFRDKQSNLYKYCNQMYFKVKITIIDFIKTVEVSHFTLQNYLYLFKDFEKDFQVKHFKSSEVFIHYCQTFLSNYRGNNGQLVFIDTHVGDNMDLKSYNSFWNIVAFLIRNPLNINFKIIDPYTLFFNITLKISNINVDNNNNSAVMNSNQRDYEIFNNIFENIKYVITNYQPNGYIVYYKPSSLFGGDLYWCNKLIDWIFDNAKDDIINKRCKIEESDLIKCGKFNYLFYERGYYYFDSIRNRYLPFSGHPILDSGRLGNINLLHLFLNTSGLQIFEKEANREDRVRKQKGKKDKESSSSGSSIGNPSSSGGSDFYNLDDSENESDSENNNEIEDDMKSIYRFKEDFTSILMNASRYGRLNIFQYLYFNYPFLVSKRSWIAADNLVSKATRFGLLQNTTFQNIGKTAEDNGKSSYSLNFLINFILRFL</sequence>
<proteinExistence type="predicted"/>
<evidence type="ECO:0000256" key="1">
    <source>
        <dbReference type="SAM" id="MobiDB-lite"/>
    </source>
</evidence>
<evidence type="ECO:0000305" key="2"/>
<organism>
    <name type="scientific">Dictyostelium discoideum</name>
    <name type="common">Social amoeba</name>
    <dbReference type="NCBI Taxonomy" id="44689"/>
    <lineage>
        <taxon>Eukaryota</taxon>
        <taxon>Amoebozoa</taxon>
        <taxon>Evosea</taxon>
        <taxon>Eumycetozoa</taxon>
        <taxon>Dictyostelia</taxon>
        <taxon>Dictyosteliales</taxon>
        <taxon>Dictyosteliaceae</taxon>
        <taxon>Dictyostelium</taxon>
    </lineage>
</organism>
<gene>
    <name type="ORF">DDB_G0282133</name>
</gene>
<protein>
    <recommendedName>
        <fullName>Putative uncharacterized protein DDB_G0282133</fullName>
    </recommendedName>
</protein>
<feature type="chain" id="PRO_0000351260" description="Putative uncharacterized protein DDB_G0282133">
    <location>
        <begin position="1"/>
        <end position="2869"/>
    </location>
</feature>
<feature type="region of interest" description="Disordered" evidence="1">
    <location>
        <begin position="1"/>
        <end position="132"/>
    </location>
</feature>
<feature type="region of interest" description="Disordered" evidence="1">
    <location>
        <begin position="171"/>
        <end position="349"/>
    </location>
</feature>
<feature type="region of interest" description="Disordered" evidence="1">
    <location>
        <begin position="380"/>
        <end position="485"/>
    </location>
</feature>
<feature type="region of interest" description="Disordered" evidence="1">
    <location>
        <begin position="498"/>
        <end position="517"/>
    </location>
</feature>
<feature type="region of interest" description="Disordered" evidence="1">
    <location>
        <begin position="690"/>
        <end position="812"/>
    </location>
</feature>
<feature type="region of interest" description="Disordered" evidence="1">
    <location>
        <begin position="860"/>
        <end position="1074"/>
    </location>
</feature>
<feature type="region of interest" description="Disordered" evidence="1">
    <location>
        <begin position="1108"/>
        <end position="1175"/>
    </location>
</feature>
<feature type="region of interest" description="Disordered" evidence="1">
    <location>
        <begin position="1188"/>
        <end position="1216"/>
    </location>
</feature>
<feature type="region of interest" description="Disordered" evidence="1">
    <location>
        <begin position="1224"/>
        <end position="1243"/>
    </location>
</feature>
<feature type="region of interest" description="Disordered" evidence="1">
    <location>
        <begin position="1340"/>
        <end position="1448"/>
    </location>
</feature>
<feature type="region of interest" description="Disordered" evidence="1">
    <location>
        <begin position="1476"/>
        <end position="1704"/>
    </location>
</feature>
<feature type="region of interest" description="Disordered" evidence="1">
    <location>
        <begin position="1731"/>
        <end position="1832"/>
    </location>
</feature>
<feature type="region of interest" description="Disordered" evidence="1">
    <location>
        <begin position="2725"/>
        <end position="2773"/>
    </location>
</feature>
<feature type="compositionally biased region" description="Low complexity" evidence="1">
    <location>
        <begin position="1"/>
        <end position="10"/>
    </location>
</feature>
<feature type="compositionally biased region" description="Polar residues" evidence="1">
    <location>
        <begin position="14"/>
        <end position="25"/>
    </location>
</feature>
<feature type="compositionally biased region" description="Low complexity" evidence="1">
    <location>
        <begin position="26"/>
        <end position="124"/>
    </location>
</feature>
<feature type="compositionally biased region" description="Low complexity" evidence="1">
    <location>
        <begin position="171"/>
        <end position="348"/>
    </location>
</feature>
<feature type="compositionally biased region" description="Low complexity" evidence="1">
    <location>
        <begin position="388"/>
        <end position="414"/>
    </location>
</feature>
<feature type="compositionally biased region" description="Low complexity" evidence="1">
    <location>
        <begin position="421"/>
        <end position="446"/>
    </location>
</feature>
<feature type="compositionally biased region" description="Low complexity" evidence="1">
    <location>
        <begin position="454"/>
        <end position="478"/>
    </location>
</feature>
<feature type="compositionally biased region" description="Basic and acidic residues" evidence="1">
    <location>
        <begin position="505"/>
        <end position="514"/>
    </location>
</feature>
<feature type="compositionally biased region" description="Low complexity" evidence="1">
    <location>
        <begin position="690"/>
        <end position="707"/>
    </location>
</feature>
<feature type="compositionally biased region" description="Low complexity" evidence="1">
    <location>
        <begin position="714"/>
        <end position="749"/>
    </location>
</feature>
<feature type="compositionally biased region" description="Basic and acidic residues" evidence="1">
    <location>
        <begin position="750"/>
        <end position="763"/>
    </location>
</feature>
<feature type="compositionally biased region" description="Low complexity" evidence="1">
    <location>
        <begin position="764"/>
        <end position="781"/>
    </location>
</feature>
<feature type="compositionally biased region" description="Basic and acidic residues" evidence="1">
    <location>
        <begin position="782"/>
        <end position="795"/>
    </location>
</feature>
<feature type="compositionally biased region" description="Low complexity" evidence="1">
    <location>
        <begin position="796"/>
        <end position="812"/>
    </location>
</feature>
<feature type="compositionally biased region" description="Low complexity" evidence="1">
    <location>
        <begin position="860"/>
        <end position="891"/>
    </location>
</feature>
<feature type="compositionally biased region" description="Low complexity" evidence="1">
    <location>
        <begin position="898"/>
        <end position="911"/>
    </location>
</feature>
<feature type="compositionally biased region" description="Low complexity" evidence="1">
    <location>
        <begin position="921"/>
        <end position="991"/>
    </location>
</feature>
<feature type="compositionally biased region" description="Low complexity" evidence="1">
    <location>
        <begin position="1000"/>
        <end position="1074"/>
    </location>
</feature>
<feature type="compositionally biased region" description="Low complexity" evidence="1">
    <location>
        <begin position="1188"/>
        <end position="1212"/>
    </location>
</feature>
<feature type="compositionally biased region" description="Polar residues" evidence="1">
    <location>
        <begin position="1230"/>
        <end position="1243"/>
    </location>
</feature>
<feature type="compositionally biased region" description="Low complexity" evidence="1">
    <location>
        <begin position="1377"/>
        <end position="1448"/>
    </location>
</feature>
<feature type="compositionally biased region" description="Low complexity" evidence="1">
    <location>
        <begin position="1476"/>
        <end position="1639"/>
    </location>
</feature>
<feature type="compositionally biased region" description="Acidic residues" evidence="1">
    <location>
        <begin position="1640"/>
        <end position="1659"/>
    </location>
</feature>
<feature type="compositionally biased region" description="Low complexity" evidence="1">
    <location>
        <begin position="1660"/>
        <end position="1704"/>
    </location>
</feature>
<feature type="compositionally biased region" description="Low complexity" evidence="1">
    <location>
        <begin position="1731"/>
        <end position="1823"/>
    </location>
</feature>
<feature type="compositionally biased region" description="Low complexity" evidence="1">
    <location>
        <begin position="2739"/>
        <end position="2754"/>
    </location>
</feature>
<feature type="compositionally biased region" description="Acidic residues" evidence="1">
    <location>
        <begin position="2758"/>
        <end position="2773"/>
    </location>
</feature>
<accession>Q54SZ6</accession>
<comment type="sequence caution" evidence="2">
    <conflict type="erroneous gene model prediction">
        <sequence resource="EMBL-CDS" id="EAL66392"/>
    </conflict>
</comment>
<name>Y8359_DICDI</name>
<keyword id="KW-1185">Reference proteome</keyword>
<dbReference type="EMBL" id="AAFI02000045">
    <property type="protein sequence ID" value="EAL66392.1"/>
    <property type="status" value="ALT_SEQ"/>
    <property type="molecule type" value="Genomic_DNA"/>
</dbReference>
<dbReference type="RefSeq" id="XP_640359.1">
    <property type="nucleotide sequence ID" value="XM_635267.1"/>
</dbReference>
<dbReference type="PaxDb" id="44689-DDB0205138"/>
<dbReference type="EnsemblProtists" id="EAL66392">
    <property type="protein sequence ID" value="EAL66392"/>
    <property type="gene ID" value="DDB_G0282133"/>
</dbReference>
<dbReference type="GeneID" id="8623414"/>
<dbReference type="KEGG" id="ddi:DDB_G0282133"/>
<dbReference type="dictyBase" id="DDB_G0282133"/>
<dbReference type="VEuPathDB" id="AmoebaDB:DDB_G0282111"/>
<dbReference type="VEuPathDB" id="AmoebaDB:DDB_G0282133"/>
<dbReference type="eggNOG" id="ENOG502S5GU">
    <property type="taxonomic scope" value="Eukaryota"/>
</dbReference>
<dbReference type="InParanoid" id="Q54SZ6"/>
<dbReference type="PRO" id="PR:Q54SZ6"/>
<dbReference type="Proteomes" id="UP000002195">
    <property type="component" value="Chromosome 3"/>
</dbReference>
<dbReference type="InterPro" id="IPR051904">
    <property type="entry name" value="UPF0746_actin_org"/>
</dbReference>
<dbReference type="PANTHER" id="PTHR32488:SF90">
    <property type="entry name" value="DEFECTIVE IN TIP FORMATION PROTEIN A-RELATED"/>
    <property type="match status" value="1"/>
</dbReference>
<dbReference type="PANTHER" id="PTHR32488">
    <property type="entry name" value="UPF0746 PROTEIN DDB_G0280785-RELATED"/>
    <property type="match status" value="1"/>
</dbReference>